<name>EFTS_ALLAM</name>
<reference key="1">
    <citation type="journal article" date="2009" name="J. Bacteriol.">
        <title>Genome sequences of three Agrobacterium biovars help elucidate the evolution of multichromosome genomes in bacteria.</title>
        <authorList>
            <person name="Slater S.C."/>
            <person name="Goldman B.S."/>
            <person name="Goodner B."/>
            <person name="Setubal J.C."/>
            <person name="Farrand S.K."/>
            <person name="Nester E.W."/>
            <person name="Burr T.J."/>
            <person name="Banta L."/>
            <person name="Dickerman A.W."/>
            <person name="Paulsen I."/>
            <person name="Otten L."/>
            <person name="Suen G."/>
            <person name="Welch R."/>
            <person name="Almeida N.F."/>
            <person name="Arnold F."/>
            <person name="Burton O.T."/>
            <person name="Du Z."/>
            <person name="Ewing A."/>
            <person name="Godsy E."/>
            <person name="Heisel S."/>
            <person name="Houmiel K.L."/>
            <person name="Jhaveri J."/>
            <person name="Lu J."/>
            <person name="Miller N.M."/>
            <person name="Norton S."/>
            <person name="Chen Q."/>
            <person name="Phoolcharoen W."/>
            <person name="Ohlin V."/>
            <person name="Ondrusek D."/>
            <person name="Pride N."/>
            <person name="Stricklin S.L."/>
            <person name="Sun J."/>
            <person name="Wheeler C."/>
            <person name="Wilson L."/>
            <person name="Zhu H."/>
            <person name="Wood D.W."/>
        </authorList>
    </citation>
    <scope>NUCLEOTIDE SEQUENCE [LARGE SCALE GENOMIC DNA]</scope>
    <source>
        <strain>ATCC BAA-846 / DSM 112012 / S4</strain>
    </source>
</reference>
<proteinExistence type="inferred from homology"/>
<comment type="function">
    <text evidence="1">Associates with the EF-Tu.GDP complex and induces the exchange of GDP to GTP. It remains bound to the aminoacyl-tRNA.EF-Tu.GTP complex up to the GTP hydrolysis stage on the ribosome.</text>
</comment>
<comment type="subcellular location">
    <subcellularLocation>
        <location evidence="1">Cytoplasm</location>
    </subcellularLocation>
</comment>
<comment type="similarity">
    <text evidence="1">Belongs to the EF-Ts family.</text>
</comment>
<evidence type="ECO:0000255" key="1">
    <source>
        <dbReference type="HAMAP-Rule" id="MF_00050"/>
    </source>
</evidence>
<feature type="chain" id="PRO_1000117552" description="Elongation factor Ts">
    <location>
        <begin position="1"/>
        <end position="308"/>
    </location>
</feature>
<feature type="region of interest" description="Involved in Mg(2+) ion dislocation from EF-Tu" evidence="1">
    <location>
        <begin position="80"/>
        <end position="83"/>
    </location>
</feature>
<gene>
    <name evidence="1" type="primary">tsf</name>
    <name type="ordered locus">Avi_2525</name>
</gene>
<protein>
    <recommendedName>
        <fullName evidence="1">Elongation factor Ts</fullName>
        <shortName evidence="1">EF-Ts</shortName>
    </recommendedName>
</protein>
<sequence>MTEITAAMVKELREKSGAGMMDCKKALAENGGDMEASIDWLRAKGIAKADKKSGRTAAEGLIGIASSGTTAVVVEVNSETDFVARNDAFQDMVRGISNVALSTDGTVDSINAATYAATGKSVSDSIKDAIATIGENMALRRATQLKVEDGVVATYVHNAVADGLGKLGVLVALKSTGNKEALNTIGRQIAMHVAATNPLAVRAEEVDAAVAERERNVFIEQSRESGKPENIIEKMVEGRMRKFFEDVALLSQAFVINPDLTVAAALKEAEKDVGAPIEITGIARLLLGEGIEKEESDFAAEVAAVAKG</sequence>
<keyword id="KW-0963">Cytoplasm</keyword>
<keyword id="KW-0251">Elongation factor</keyword>
<keyword id="KW-0648">Protein biosynthesis</keyword>
<keyword id="KW-1185">Reference proteome</keyword>
<dbReference type="EMBL" id="CP000633">
    <property type="protein sequence ID" value="ACM36810.1"/>
    <property type="molecule type" value="Genomic_DNA"/>
</dbReference>
<dbReference type="RefSeq" id="WP_015916231.1">
    <property type="nucleotide sequence ID" value="NC_011989.1"/>
</dbReference>
<dbReference type="SMR" id="B9JX32"/>
<dbReference type="STRING" id="311402.Avi_2525"/>
<dbReference type="KEGG" id="avi:Avi_2525"/>
<dbReference type="eggNOG" id="COG0264">
    <property type="taxonomic scope" value="Bacteria"/>
</dbReference>
<dbReference type="HOGENOM" id="CLU_047155_2_0_5"/>
<dbReference type="Proteomes" id="UP000001596">
    <property type="component" value="Chromosome 1"/>
</dbReference>
<dbReference type="GO" id="GO:0005737">
    <property type="term" value="C:cytoplasm"/>
    <property type="evidence" value="ECO:0007669"/>
    <property type="project" value="UniProtKB-SubCell"/>
</dbReference>
<dbReference type="GO" id="GO:0003746">
    <property type="term" value="F:translation elongation factor activity"/>
    <property type="evidence" value="ECO:0007669"/>
    <property type="project" value="UniProtKB-UniRule"/>
</dbReference>
<dbReference type="CDD" id="cd14275">
    <property type="entry name" value="UBA_EF-Ts"/>
    <property type="match status" value="1"/>
</dbReference>
<dbReference type="FunFam" id="1.10.286.20:FF:000001">
    <property type="entry name" value="Elongation factor Ts"/>
    <property type="match status" value="1"/>
</dbReference>
<dbReference type="FunFam" id="1.10.8.10:FF:000001">
    <property type="entry name" value="Elongation factor Ts"/>
    <property type="match status" value="1"/>
</dbReference>
<dbReference type="Gene3D" id="1.10.286.20">
    <property type="match status" value="1"/>
</dbReference>
<dbReference type="Gene3D" id="1.10.8.10">
    <property type="entry name" value="DNA helicase RuvA subunit, C-terminal domain"/>
    <property type="match status" value="1"/>
</dbReference>
<dbReference type="Gene3D" id="3.30.479.20">
    <property type="entry name" value="Elongation factor Ts, dimerisation domain"/>
    <property type="match status" value="2"/>
</dbReference>
<dbReference type="HAMAP" id="MF_00050">
    <property type="entry name" value="EF_Ts"/>
    <property type="match status" value="1"/>
</dbReference>
<dbReference type="InterPro" id="IPR036402">
    <property type="entry name" value="EF-Ts_dimer_sf"/>
</dbReference>
<dbReference type="InterPro" id="IPR001816">
    <property type="entry name" value="Transl_elong_EFTs/EF1B"/>
</dbReference>
<dbReference type="InterPro" id="IPR014039">
    <property type="entry name" value="Transl_elong_EFTs/EF1B_dimer"/>
</dbReference>
<dbReference type="InterPro" id="IPR018101">
    <property type="entry name" value="Transl_elong_Ts_CS"/>
</dbReference>
<dbReference type="InterPro" id="IPR009060">
    <property type="entry name" value="UBA-like_sf"/>
</dbReference>
<dbReference type="NCBIfam" id="TIGR00116">
    <property type="entry name" value="tsf"/>
    <property type="match status" value="1"/>
</dbReference>
<dbReference type="PANTHER" id="PTHR11741">
    <property type="entry name" value="ELONGATION FACTOR TS"/>
    <property type="match status" value="1"/>
</dbReference>
<dbReference type="PANTHER" id="PTHR11741:SF0">
    <property type="entry name" value="ELONGATION FACTOR TS, MITOCHONDRIAL"/>
    <property type="match status" value="1"/>
</dbReference>
<dbReference type="Pfam" id="PF00889">
    <property type="entry name" value="EF_TS"/>
    <property type="match status" value="1"/>
</dbReference>
<dbReference type="SUPFAM" id="SSF54713">
    <property type="entry name" value="Elongation factor Ts (EF-Ts), dimerisation domain"/>
    <property type="match status" value="1"/>
</dbReference>
<dbReference type="SUPFAM" id="SSF46934">
    <property type="entry name" value="UBA-like"/>
    <property type="match status" value="1"/>
</dbReference>
<dbReference type="PROSITE" id="PS01126">
    <property type="entry name" value="EF_TS_1"/>
    <property type="match status" value="1"/>
</dbReference>
<dbReference type="PROSITE" id="PS01127">
    <property type="entry name" value="EF_TS_2"/>
    <property type="match status" value="1"/>
</dbReference>
<organism>
    <name type="scientific">Allorhizobium ampelinum (strain ATCC BAA-846 / DSM 112012 / S4)</name>
    <name type="common">Agrobacterium vitis (strain S4)</name>
    <dbReference type="NCBI Taxonomy" id="311402"/>
    <lineage>
        <taxon>Bacteria</taxon>
        <taxon>Pseudomonadati</taxon>
        <taxon>Pseudomonadota</taxon>
        <taxon>Alphaproteobacteria</taxon>
        <taxon>Hyphomicrobiales</taxon>
        <taxon>Rhizobiaceae</taxon>
        <taxon>Rhizobium/Agrobacterium group</taxon>
        <taxon>Allorhizobium</taxon>
        <taxon>Allorhizobium ampelinum</taxon>
    </lineage>
</organism>
<accession>B9JX32</accession>